<gene>
    <name type="primary">ND3</name>
    <name type="synonym">NAD3</name>
</gene>
<protein>
    <recommendedName>
        <fullName>NADH-ubiquinone oxidoreductase chain 3</fullName>
        <ecNumber>7.1.1.2</ecNumber>
    </recommendedName>
    <alternativeName>
        <fullName>NADH dehydrogenase subunit 3</fullName>
    </alternativeName>
</protein>
<organism>
    <name type="scientific">Chondrus crispus</name>
    <name type="common">Carrageen Irish moss</name>
    <name type="synonym">Polymorpha crispa</name>
    <dbReference type="NCBI Taxonomy" id="2769"/>
    <lineage>
        <taxon>Eukaryota</taxon>
        <taxon>Rhodophyta</taxon>
        <taxon>Florideophyceae</taxon>
        <taxon>Rhodymeniophycidae</taxon>
        <taxon>Gigartinales</taxon>
        <taxon>Gigartinaceae</taxon>
        <taxon>Chondrus</taxon>
    </lineage>
</organism>
<sequence length="121" mass="14141">MKLIFTEYSAILIFFAISSLLSSVIFLLSYFLIPQKPDQEKVSAYECGFNPFDDARATFDIRFYLVAILFLIFDLEISFLFPWSLVLGEISIIGFWSMIVFLVILTIGFIYEWYKGALEWE</sequence>
<dbReference type="EC" id="7.1.1.2"/>
<dbReference type="EMBL" id="Z47547">
    <property type="protein sequence ID" value="CAA87616.1"/>
    <property type="molecule type" value="Genomic_DNA"/>
</dbReference>
<dbReference type="PIR" id="S59100">
    <property type="entry name" value="S59100"/>
</dbReference>
<dbReference type="RefSeq" id="NP_062492.1">
    <property type="nucleotide sequence ID" value="NC_001677.2"/>
</dbReference>
<dbReference type="SMR" id="P48910"/>
<dbReference type="GeneID" id="809389"/>
<dbReference type="KEGG" id="ccp:ChcroMp13"/>
<dbReference type="GO" id="GO:0031966">
    <property type="term" value="C:mitochondrial membrane"/>
    <property type="evidence" value="ECO:0007669"/>
    <property type="project" value="UniProtKB-SubCell"/>
</dbReference>
<dbReference type="GO" id="GO:0030964">
    <property type="term" value="C:NADH dehydrogenase complex"/>
    <property type="evidence" value="ECO:0007669"/>
    <property type="project" value="TreeGrafter"/>
</dbReference>
<dbReference type="GO" id="GO:0008137">
    <property type="term" value="F:NADH dehydrogenase (ubiquinone) activity"/>
    <property type="evidence" value="ECO:0007669"/>
    <property type="project" value="UniProtKB-EC"/>
</dbReference>
<dbReference type="FunFam" id="1.20.58.1610:FF:000004">
    <property type="entry name" value="NADH-quinone oxidoreductase subunit A"/>
    <property type="match status" value="1"/>
</dbReference>
<dbReference type="Gene3D" id="1.20.58.1610">
    <property type="entry name" value="NADH:ubiquinone/plastoquinone oxidoreductase, chain 3"/>
    <property type="match status" value="1"/>
</dbReference>
<dbReference type="HAMAP" id="MF_01394">
    <property type="entry name" value="NDH1_NuoA"/>
    <property type="match status" value="1"/>
</dbReference>
<dbReference type="InterPro" id="IPR023043">
    <property type="entry name" value="NAD(P)H_OxRDtase_bac/plastid"/>
</dbReference>
<dbReference type="InterPro" id="IPR000440">
    <property type="entry name" value="NADH_UbQ/plastoQ_OxRdtase_su3"/>
</dbReference>
<dbReference type="InterPro" id="IPR038430">
    <property type="entry name" value="NDAH_ubi_oxred_su3_sf"/>
</dbReference>
<dbReference type="PANTHER" id="PTHR11058">
    <property type="entry name" value="NADH-UBIQUINONE OXIDOREDUCTASE CHAIN 3"/>
    <property type="match status" value="1"/>
</dbReference>
<dbReference type="PANTHER" id="PTHR11058:SF9">
    <property type="entry name" value="NADH-UBIQUINONE OXIDOREDUCTASE CHAIN 3"/>
    <property type="match status" value="1"/>
</dbReference>
<dbReference type="Pfam" id="PF00507">
    <property type="entry name" value="Oxidored_q4"/>
    <property type="match status" value="1"/>
</dbReference>
<accession>P48910</accession>
<name>NU3M_CHOCR</name>
<keyword id="KW-0249">Electron transport</keyword>
<keyword id="KW-0472">Membrane</keyword>
<keyword id="KW-0496">Mitochondrion</keyword>
<keyword id="KW-0520">NAD</keyword>
<keyword id="KW-0679">Respiratory chain</keyword>
<keyword id="KW-1278">Translocase</keyword>
<keyword id="KW-0812">Transmembrane</keyword>
<keyword id="KW-1133">Transmembrane helix</keyword>
<keyword id="KW-0813">Transport</keyword>
<keyword id="KW-0830">Ubiquinone</keyword>
<feature type="chain" id="PRO_0000117728" description="NADH-ubiquinone oxidoreductase chain 3">
    <location>
        <begin position="1"/>
        <end position="121"/>
    </location>
</feature>
<feature type="transmembrane region" description="Helical" evidence="2">
    <location>
        <begin position="11"/>
        <end position="31"/>
    </location>
</feature>
<feature type="transmembrane region" description="Helical" evidence="2">
    <location>
        <begin position="63"/>
        <end position="83"/>
    </location>
</feature>
<feature type="transmembrane region" description="Helical" evidence="2">
    <location>
        <begin position="90"/>
        <end position="110"/>
    </location>
</feature>
<comment type="function">
    <text evidence="1">Core subunit of the mitochondrial membrane respiratory chain NADH dehydrogenase (Complex I) that is believed to belong to the minimal assembly required for catalysis. Complex I functions in the transfer of electrons from NADH to the respiratory chain. The immediate electron acceptor for the enzyme is believed to be ubiquinone (By similarity).</text>
</comment>
<comment type="catalytic activity">
    <reaction>
        <text>a ubiquinone + NADH + 5 H(+)(in) = a ubiquinol + NAD(+) + 4 H(+)(out)</text>
        <dbReference type="Rhea" id="RHEA:29091"/>
        <dbReference type="Rhea" id="RHEA-COMP:9565"/>
        <dbReference type="Rhea" id="RHEA-COMP:9566"/>
        <dbReference type="ChEBI" id="CHEBI:15378"/>
        <dbReference type="ChEBI" id="CHEBI:16389"/>
        <dbReference type="ChEBI" id="CHEBI:17976"/>
        <dbReference type="ChEBI" id="CHEBI:57540"/>
        <dbReference type="ChEBI" id="CHEBI:57945"/>
        <dbReference type="EC" id="7.1.1.2"/>
    </reaction>
</comment>
<comment type="subcellular location">
    <subcellularLocation>
        <location evidence="1">Mitochondrion membrane</location>
        <topology evidence="1">Multi-pass membrane protein</topology>
    </subcellularLocation>
</comment>
<comment type="similarity">
    <text evidence="3">Belongs to the complex I subunit 3 family.</text>
</comment>
<reference key="1">
    <citation type="journal article" date="1995" name="J. Mol. Biol.">
        <title>Complete sequence of the mitochondrial DNA of the rhodophyte Chondrus crispus (Gigartinales). Gene content and genome organization.</title>
        <authorList>
            <person name="Leblanc C."/>
            <person name="Boyen C."/>
            <person name="Richard O."/>
            <person name="Bonnard G."/>
            <person name="Grienenberger J.-M."/>
            <person name="Kloareg B."/>
        </authorList>
    </citation>
    <scope>NUCLEOTIDE SEQUENCE [GENOMIC DNA]</scope>
    <source>
        <tissue>Apices</tissue>
    </source>
</reference>
<geneLocation type="mitochondrion"/>
<proteinExistence type="inferred from homology"/>
<evidence type="ECO:0000250" key="1"/>
<evidence type="ECO:0000255" key="2"/>
<evidence type="ECO:0000305" key="3"/>